<keyword id="KW-0025">Alternative splicing</keyword>
<keyword id="KW-1267">Proteomics identification</keyword>
<keyword id="KW-1185">Reference proteome</keyword>
<proteinExistence type="evidence at protein level"/>
<sequence>MPRPRRVSQLLDLCLWCFMKNISRYLTDIKPLPPNIKDRLIKIMSMQGQITDSNISEILHPEVQTLDLRSCDISDAALLHLSNCRKLKKLNLNASKGNRVSVTSEGIKAVASSCSYLHEASLKRCCNLTDEGVVALALNCQLLKIIDLGGCLSITDVSLHALGKNCPFLQCVDFSATQVSDSGVIALVSGPCAKKLEEIHMGHCVNLTDGAVEAVLTYCPQIRILLFHGCPLITDHSREVLEQLVGPNKLKQVTWTVY</sequence>
<comment type="subunit">
    <text evidence="1">Interacts with TASOR.</text>
</comment>
<comment type="alternative products">
    <event type="alternative splicing"/>
    <isoform>
        <id>Q8IY45-1</id>
        <name>1</name>
        <sequence type="displayed"/>
    </isoform>
    <isoform>
        <id>Q8IY45-2</id>
        <name>2</name>
        <sequence type="described" ref="VSP_054567"/>
    </isoform>
</comment>
<comment type="similarity">
    <text evidence="3">Belongs to the AMN1 family.</text>
</comment>
<comment type="sequence caution" evidence="3">
    <conflict type="erroneous initiation">
        <sequence resource="EMBL-CDS" id="AAH37897"/>
    </conflict>
</comment>
<comment type="sequence caution" evidence="3">
    <conflict type="erroneous initiation">
        <sequence resource="EMBL-CDS" id="AAH45831"/>
    </conflict>
</comment>
<comment type="sequence caution" evidence="3">
    <conflict type="erroneous initiation">
        <sequence resource="EMBL-CDS" id="AAH67906"/>
    </conflict>
</comment>
<reference key="1">
    <citation type="journal article" date="2004" name="Nat. Genet.">
        <title>Complete sequencing and characterization of 21,243 full-length human cDNAs.</title>
        <authorList>
            <person name="Ota T."/>
            <person name="Suzuki Y."/>
            <person name="Nishikawa T."/>
            <person name="Otsuki T."/>
            <person name="Sugiyama T."/>
            <person name="Irie R."/>
            <person name="Wakamatsu A."/>
            <person name="Hayashi K."/>
            <person name="Sato H."/>
            <person name="Nagai K."/>
            <person name="Kimura K."/>
            <person name="Makita H."/>
            <person name="Sekine M."/>
            <person name="Obayashi M."/>
            <person name="Nishi T."/>
            <person name="Shibahara T."/>
            <person name="Tanaka T."/>
            <person name="Ishii S."/>
            <person name="Yamamoto J."/>
            <person name="Saito K."/>
            <person name="Kawai Y."/>
            <person name="Isono Y."/>
            <person name="Nakamura Y."/>
            <person name="Nagahari K."/>
            <person name="Murakami K."/>
            <person name="Yasuda T."/>
            <person name="Iwayanagi T."/>
            <person name="Wagatsuma M."/>
            <person name="Shiratori A."/>
            <person name="Sudo H."/>
            <person name="Hosoiri T."/>
            <person name="Kaku Y."/>
            <person name="Kodaira H."/>
            <person name="Kondo H."/>
            <person name="Sugawara M."/>
            <person name="Takahashi M."/>
            <person name="Kanda K."/>
            <person name="Yokoi T."/>
            <person name="Furuya T."/>
            <person name="Kikkawa E."/>
            <person name="Omura Y."/>
            <person name="Abe K."/>
            <person name="Kamihara K."/>
            <person name="Katsuta N."/>
            <person name="Sato K."/>
            <person name="Tanikawa M."/>
            <person name="Yamazaki M."/>
            <person name="Ninomiya K."/>
            <person name="Ishibashi T."/>
            <person name="Yamashita H."/>
            <person name="Murakawa K."/>
            <person name="Fujimori K."/>
            <person name="Tanai H."/>
            <person name="Kimata M."/>
            <person name="Watanabe M."/>
            <person name="Hiraoka S."/>
            <person name="Chiba Y."/>
            <person name="Ishida S."/>
            <person name="Ono Y."/>
            <person name="Takiguchi S."/>
            <person name="Watanabe S."/>
            <person name="Yosida M."/>
            <person name="Hotuta T."/>
            <person name="Kusano J."/>
            <person name="Kanehori K."/>
            <person name="Takahashi-Fujii A."/>
            <person name="Hara H."/>
            <person name="Tanase T.-O."/>
            <person name="Nomura Y."/>
            <person name="Togiya S."/>
            <person name="Komai F."/>
            <person name="Hara R."/>
            <person name="Takeuchi K."/>
            <person name="Arita M."/>
            <person name="Imose N."/>
            <person name="Musashino K."/>
            <person name="Yuuki H."/>
            <person name="Oshima A."/>
            <person name="Sasaki N."/>
            <person name="Aotsuka S."/>
            <person name="Yoshikawa Y."/>
            <person name="Matsunawa H."/>
            <person name="Ichihara T."/>
            <person name="Shiohata N."/>
            <person name="Sano S."/>
            <person name="Moriya S."/>
            <person name="Momiyama H."/>
            <person name="Satoh N."/>
            <person name="Takami S."/>
            <person name="Terashima Y."/>
            <person name="Suzuki O."/>
            <person name="Nakagawa S."/>
            <person name="Senoh A."/>
            <person name="Mizoguchi H."/>
            <person name="Goto Y."/>
            <person name="Shimizu F."/>
            <person name="Wakebe H."/>
            <person name="Hishigaki H."/>
            <person name="Watanabe T."/>
            <person name="Sugiyama A."/>
            <person name="Takemoto M."/>
            <person name="Kawakami B."/>
            <person name="Yamazaki M."/>
            <person name="Watanabe K."/>
            <person name="Kumagai A."/>
            <person name="Itakura S."/>
            <person name="Fukuzumi Y."/>
            <person name="Fujimori Y."/>
            <person name="Komiyama M."/>
            <person name="Tashiro H."/>
            <person name="Tanigami A."/>
            <person name="Fujiwara T."/>
            <person name="Ono T."/>
            <person name="Yamada K."/>
            <person name="Fujii Y."/>
            <person name="Ozaki K."/>
            <person name="Hirao M."/>
            <person name="Ohmori Y."/>
            <person name="Kawabata A."/>
            <person name="Hikiji T."/>
            <person name="Kobatake N."/>
            <person name="Inagaki H."/>
            <person name="Ikema Y."/>
            <person name="Okamoto S."/>
            <person name="Okitani R."/>
            <person name="Kawakami T."/>
            <person name="Noguchi S."/>
            <person name="Itoh T."/>
            <person name="Shigeta K."/>
            <person name="Senba T."/>
            <person name="Matsumura K."/>
            <person name="Nakajima Y."/>
            <person name="Mizuno T."/>
            <person name="Morinaga M."/>
            <person name="Sasaki M."/>
            <person name="Togashi T."/>
            <person name="Oyama M."/>
            <person name="Hata H."/>
            <person name="Watanabe M."/>
            <person name="Komatsu T."/>
            <person name="Mizushima-Sugano J."/>
            <person name="Satoh T."/>
            <person name="Shirai Y."/>
            <person name="Takahashi Y."/>
            <person name="Nakagawa K."/>
            <person name="Okumura K."/>
            <person name="Nagase T."/>
            <person name="Nomura N."/>
            <person name="Kikuchi H."/>
            <person name="Masuho Y."/>
            <person name="Yamashita R."/>
            <person name="Nakai K."/>
            <person name="Yada T."/>
            <person name="Nakamura Y."/>
            <person name="Ohara O."/>
            <person name="Isogai T."/>
            <person name="Sugano S."/>
        </authorList>
    </citation>
    <scope>NUCLEOTIDE SEQUENCE [LARGE SCALE MRNA] (ISOFORM 2)</scope>
    <source>
        <tissue>Testis</tissue>
    </source>
</reference>
<reference key="2">
    <citation type="journal article" date="2006" name="Nature">
        <title>The finished DNA sequence of human chromosome 12.</title>
        <authorList>
            <person name="Scherer S.E."/>
            <person name="Muzny D.M."/>
            <person name="Buhay C.J."/>
            <person name="Chen R."/>
            <person name="Cree A."/>
            <person name="Ding Y."/>
            <person name="Dugan-Rocha S."/>
            <person name="Gill R."/>
            <person name="Gunaratne P."/>
            <person name="Harris R.A."/>
            <person name="Hawes A.C."/>
            <person name="Hernandez J."/>
            <person name="Hodgson A.V."/>
            <person name="Hume J."/>
            <person name="Jackson A."/>
            <person name="Khan Z.M."/>
            <person name="Kovar-Smith C."/>
            <person name="Lewis L.R."/>
            <person name="Lozado R.J."/>
            <person name="Metzker M.L."/>
            <person name="Milosavljevic A."/>
            <person name="Miner G.R."/>
            <person name="Montgomery K.T."/>
            <person name="Morgan M.B."/>
            <person name="Nazareth L.V."/>
            <person name="Scott G."/>
            <person name="Sodergren E."/>
            <person name="Song X.-Z."/>
            <person name="Steffen D."/>
            <person name="Lovering R.C."/>
            <person name="Wheeler D.A."/>
            <person name="Worley K.C."/>
            <person name="Yuan Y."/>
            <person name="Zhang Z."/>
            <person name="Adams C.Q."/>
            <person name="Ansari-Lari M.A."/>
            <person name="Ayele M."/>
            <person name="Brown M.J."/>
            <person name="Chen G."/>
            <person name="Chen Z."/>
            <person name="Clerc-Blankenburg K.P."/>
            <person name="Davis C."/>
            <person name="Delgado O."/>
            <person name="Dinh H.H."/>
            <person name="Draper H."/>
            <person name="Gonzalez-Garay M.L."/>
            <person name="Havlak P."/>
            <person name="Jackson L.R."/>
            <person name="Jacob L.S."/>
            <person name="Kelly S.H."/>
            <person name="Li L."/>
            <person name="Li Z."/>
            <person name="Liu J."/>
            <person name="Liu W."/>
            <person name="Lu J."/>
            <person name="Maheshwari M."/>
            <person name="Nguyen B.-V."/>
            <person name="Okwuonu G.O."/>
            <person name="Pasternak S."/>
            <person name="Perez L.M."/>
            <person name="Plopper F.J.H."/>
            <person name="Santibanez J."/>
            <person name="Shen H."/>
            <person name="Tabor P.E."/>
            <person name="Verduzco D."/>
            <person name="Waldron L."/>
            <person name="Wang Q."/>
            <person name="Williams G.A."/>
            <person name="Zhang J."/>
            <person name="Zhou J."/>
            <person name="Allen C.C."/>
            <person name="Amin A.G."/>
            <person name="Anyalebechi V."/>
            <person name="Bailey M."/>
            <person name="Barbaria J.A."/>
            <person name="Bimage K.E."/>
            <person name="Bryant N.P."/>
            <person name="Burch P.E."/>
            <person name="Burkett C.E."/>
            <person name="Burrell K.L."/>
            <person name="Calderon E."/>
            <person name="Cardenas V."/>
            <person name="Carter K."/>
            <person name="Casias K."/>
            <person name="Cavazos I."/>
            <person name="Cavazos S.R."/>
            <person name="Ceasar H."/>
            <person name="Chacko J."/>
            <person name="Chan S.N."/>
            <person name="Chavez D."/>
            <person name="Christopoulos C."/>
            <person name="Chu J."/>
            <person name="Cockrell R."/>
            <person name="Cox C.D."/>
            <person name="Dang M."/>
            <person name="Dathorne S.R."/>
            <person name="David R."/>
            <person name="Davis C.M."/>
            <person name="Davy-Carroll L."/>
            <person name="Deshazo D.R."/>
            <person name="Donlin J.E."/>
            <person name="D'Souza L."/>
            <person name="Eaves K.A."/>
            <person name="Egan A."/>
            <person name="Emery-Cohen A.J."/>
            <person name="Escotto M."/>
            <person name="Flagg N."/>
            <person name="Forbes L.D."/>
            <person name="Gabisi A.M."/>
            <person name="Garza M."/>
            <person name="Hamilton C."/>
            <person name="Henderson N."/>
            <person name="Hernandez O."/>
            <person name="Hines S."/>
            <person name="Hogues M.E."/>
            <person name="Huang M."/>
            <person name="Idlebird D.G."/>
            <person name="Johnson R."/>
            <person name="Jolivet A."/>
            <person name="Jones S."/>
            <person name="Kagan R."/>
            <person name="King L.M."/>
            <person name="Leal B."/>
            <person name="Lebow H."/>
            <person name="Lee S."/>
            <person name="LeVan J.M."/>
            <person name="Lewis L.C."/>
            <person name="London P."/>
            <person name="Lorensuhewa L.M."/>
            <person name="Loulseged H."/>
            <person name="Lovett D.A."/>
            <person name="Lucier A."/>
            <person name="Lucier R.L."/>
            <person name="Ma J."/>
            <person name="Madu R.C."/>
            <person name="Mapua P."/>
            <person name="Martindale A.D."/>
            <person name="Martinez E."/>
            <person name="Massey E."/>
            <person name="Mawhiney S."/>
            <person name="Meador M.G."/>
            <person name="Mendez S."/>
            <person name="Mercado C."/>
            <person name="Mercado I.C."/>
            <person name="Merritt C.E."/>
            <person name="Miner Z.L."/>
            <person name="Minja E."/>
            <person name="Mitchell T."/>
            <person name="Mohabbat F."/>
            <person name="Mohabbat K."/>
            <person name="Montgomery B."/>
            <person name="Moore N."/>
            <person name="Morris S."/>
            <person name="Munidasa M."/>
            <person name="Ngo R.N."/>
            <person name="Nguyen N.B."/>
            <person name="Nickerson E."/>
            <person name="Nwaokelemeh O.O."/>
            <person name="Nwokenkwo S."/>
            <person name="Obregon M."/>
            <person name="Oguh M."/>
            <person name="Oragunye N."/>
            <person name="Oviedo R.J."/>
            <person name="Parish B.J."/>
            <person name="Parker D.N."/>
            <person name="Parrish J."/>
            <person name="Parks K.L."/>
            <person name="Paul H.A."/>
            <person name="Payton B.A."/>
            <person name="Perez A."/>
            <person name="Perrin W."/>
            <person name="Pickens A."/>
            <person name="Primus E.L."/>
            <person name="Pu L.-L."/>
            <person name="Puazo M."/>
            <person name="Quiles M.M."/>
            <person name="Quiroz J.B."/>
            <person name="Rabata D."/>
            <person name="Reeves K."/>
            <person name="Ruiz S.J."/>
            <person name="Shao H."/>
            <person name="Sisson I."/>
            <person name="Sonaike T."/>
            <person name="Sorelle R.P."/>
            <person name="Sutton A.E."/>
            <person name="Svatek A.F."/>
            <person name="Svetz L.A."/>
            <person name="Tamerisa K.S."/>
            <person name="Taylor T.R."/>
            <person name="Teague B."/>
            <person name="Thomas N."/>
            <person name="Thorn R.D."/>
            <person name="Trejos Z.Y."/>
            <person name="Trevino B.K."/>
            <person name="Ukegbu O.N."/>
            <person name="Urban J.B."/>
            <person name="Vasquez L.I."/>
            <person name="Vera V.A."/>
            <person name="Villasana D.M."/>
            <person name="Wang L."/>
            <person name="Ward-Moore S."/>
            <person name="Warren J.T."/>
            <person name="Wei X."/>
            <person name="White F."/>
            <person name="Williamson A.L."/>
            <person name="Wleczyk R."/>
            <person name="Wooden H.S."/>
            <person name="Wooden S.H."/>
            <person name="Yen J."/>
            <person name="Yoon L."/>
            <person name="Yoon V."/>
            <person name="Zorrilla S.E."/>
            <person name="Nelson D."/>
            <person name="Kucherlapati R."/>
            <person name="Weinstock G."/>
            <person name="Gibbs R.A."/>
        </authorList>
    </citation>
    <scope>NUCLEOTIDE SEQUENCE [LARGE SCALE GENOMIC DNA]</scope>
</reference>
<reference key="3">
    <citation type="submission" date="2005-07" db="EMBL/GenBank/DDBJ databases">
        <authorList>
            <person name="Mural R.J."/>
            <person name="Istrail S."/>
            <person name="Sutton G."/>
            <person name="Florea L."/>
            <person name="Halpern A.L."/>
            <person name="Mobarry C.M."/>
            <person name="Lippert R."/>
            <person name="Walenz B."/>
            <person name="Shatkay H."/>
            <person name="Dew I."/>
            <person name="Miller J.R."/>
            <person name="Flanigan M.J."/>
            <person name="Edwards N.J."/>
            <person name="Bolanos R."/>
            <person name="Fasulo D."/>
            <person name="Halldorsson B.V."/>
            <person name="Hannenhalli S."/>
            <person name="Turner R."/>
            <person name="Yooseph S."/>
            <person name="Lu F."/>
            <person name="Nusskern D.R."/>
            <person name="Shue B.C."/>
            <person name="Zheng X.H."/>
            <person name="Zhong F."/>
            <person name="Delcher A.L."/>
            <person name="Huson D.H."/>
            <person name="Kravitz S.A."/>
            <person name="Mouchard L."/>
            <person name="Reinert K."/>
            <person name="Remington K.A."/>
            <person name="Clark A.G."/>
            <person name="Waterman M.S."/>
            <person name="Eichler E.E."/>
            <person name="Adams M.D."/>
            <person name="Hunkapiller M.W."/>
            <person name="Myers E.W."/>
            <person name="Venter J.C."/>
        </authorList>
    </citation>
    <scope>NUCLEOTIDE SEQUENCE [LARGE SCALE GENOMIC DNA]</scope>
</reference>
<reference key="4">
    <citation type="journal article" date="2004" name="Genome Res.">
        <title>The status, quality, and expansion of the NIH full-length cDNA project: the Mammalian Gene Collection (MGC).</title>
        <authorList>
            <consortium name="The MGC Project Team"/>
        </authorList>
    </citation>
    <scope>NUCLEOTIDE SEQUENCE [LARGE SCALE MRNA] (ISOFORM 1)</scope>
    <source>
        <tissue>Brain</tissue>
    </source>
</reference>
<dbReference type="EMBL" id="AK302112">
    <property type="protein sequence ID" value="BAH13629.1"/>
    <property type="molecule type" value="mRNA"/>
</dbReference>
<dbReference type="EMBL" id="AC023157">
    <property type="status" value="NOT_ANNOTATED_CDS"/>
    <property type="molecule type" value="Genomic_DNA"/>
</dbReference>
<dbReference type="EMBL" id="CH471116">
    <property type="protein sequence ID" value="EAW88544.1"/>
    <property type="molecule type" value="Genomic_DNA"/>
</dbReference>
<dbReference type="EMBL" id="BC037897">
    <property type="protein sequence ID" value="AAH37897.3"/>
    <property type="status" value="ALT_INIT"/>
    <property type="molecule type" value="mRNA"/>
</dbReference>
<dbReference type="EMBL" id="BC045831">
    <property type="protein sequence ID" value="AAH45831.2"/>
    <property type="status" value="ALT_INIT"/>
    <property type="molecule type" value="mRNA"/>
</dbReference>
<dbReference type="EMBL" id="BC067906">
    <property type="protein sequence ID" value="AAH67906.1"/>
    <property type="status" value="ALT_INIT"/>
    <property type="molecule type" value="mRNA"/>
</dbReference>
<dbReference type="CCDS" id="CCDS44858.1">
    <molecule id="Q8IY45-1"/>
</dbReference>
<dbReference type="CCDS" id="CCDS61089.1">
    <molecule id="Q8IY45-2"/>
</dbReference>
<dbReference type="RefSeq" id="NP_001106873.1">
    <molecule id="Q8IY45-1"/>
    <property type="nucleotide sequence ID" value="NM_001113402.2"/>
</dbReference>
<dbReference type="RefSeq" id="NP_001265340.1">
    <molecule id="Q8IY45-2"/>
    <property type="nucleotide sequence ID" value="NM_001278411.2"/>
</dbReference>
<dbReference type="RefSeq" id="NP_001265341.1">
    <molecule id="Q8IY45-2"/>
    <property type="nucleotide sequence ID" value="NM_001278412.2"/>
</dbReference>
<dbReference type="RefSeq" id="XP_016874452.1">
    <property type="nucleotide sequence ID" value="XM_017018963.1"/>
</dbReference>
<dbReference type="RefSeq" id="XP_016874453.1">
    <property type="nucleotide sequence ID" value="XM_017018964.1"/>
</dbReference>
<dbReference type="RefSeq" id="XP_016874454.1">
    <molecule id="Q8IY45-2"/>
    <property type="nucleotide sequence ID" value="XM_017018965.3"/>
</dbReference>
<dbReference type="RefSeq" id="XP_054227351.1">
    <molecule id="Q8IY45-2"/>
    <property type="nucleotide sequence ID" value="XM_054371376.1"/>
</dbReference>
<dbReference type="SMR" id="Q8IY45"/>
<dbReference type="BioGRID" id="128202">
    <property type="interactions" value="5"/>
</dbReference>
<dbReference type="FunCoup" id="Q8IY45">
    <property type="interactions" value="93"/>
</dbReference>
<dbReference type="IntAct" id="Q8IY45">
    <property type="interactions" value="3"/>
</dbReference>
<dbReference type="STRING" id="9606.ENSP00000281471"/>
<dbReference type="iPTMnet" id="Q8IY45"/>
<dbReference type="PhosphoSitePlus" id="Q8IY45"/>
<dbReference type="BioMuta" id="AMN1"/>
<dbReference type="DMDM" id="156630575"/>
<dbReference type="jPOST" id="Q8IY45"/>
<dbReference type="MassIVE" id="Q8IY45"/>
<dbReference type="PaxDb" id="9606-ENSP00000281471"/>
<dbReference type="PeptideAtlas" id="Q8IY45"/>
<dbReference type="ProteomicsDB" id="6876"/>
<dbReference type="ProteomicsDB" id="71105">
    <molecule id="Q8IY45-1"/>
</dbReference>
<dbReference type="Pumba" id="Q8IY45"/>
<dbReference type="Antibodypedia" id="24696">
    <property type="antibodies" value="140 antibodies from 24 providers"/>
</dbReference>
<dbReference type="DNASU" id="196394"/>
<dbReference type="Ensembl" id="ENST00000281471.11">
    <molecule id="Q8IY45-1"/>
    <property type="protein sequence ID" value="ENSP00000281471.6"/>
    <property type="gene ID" value="ENSG00000151743.11"/>
</dbReference>
<dbReference type="Ensembl" id="ENST00000536761.5">
    <molecule id="Q8IY45-2"/>
    <property type="protein sequence ID" value="ENSP00000440967.1"/>
    <property type="gene ID" value="ENSG00000151743.11"/>
</dbReference>
<dbReference type="Ensembl" id="ENST00000537562.5">
    <molecule id="Q8IY45-2"/>
    <property type="protein sequence ID" value="ENSP00000441419.1"/>
    <property type="gene ID" value="ENSG00000151743.11"/>
</dbReference>
<dbReference type="GeneID" id="196394"/>
<dbReference type="KEGG" id="hsa:196394"/>
<dbReference type="MANE-Select" id="ENST00000281471.11">
    <property type="protein sequence ID" value="ENSP00000281471.6"/>
    <property type="RefSeq nucleotide sequence ID" value="NM_001113402.2"/>
    <property type="RefSeq protein sequence ID" value="NP_001106873.1"/>
</dbReference>
<dbReference type="UCSC" id="uc001rkq.4">
    <molecule id="Q8IY45-1"/>
    <property type="organism name" value="human"/>
</dbReference>
<dbReference type="AGR" id="HGNC:27281"/>
<dbReference type="CTD" id="196394"/>
<dbReference type="GeneCards" id="AMN1"/>
<dbReference type="HGNC" id="HGNC:27281">
    <property type="gene designation" value="AMN1"/>
</dbReference>
<dbReference type="HPA" id="ENSG00000151743">
    <property type="expression patterns" value="Tissue enhanced (testis)"/>
</dbReference>
<dbReference type="MIM" id="620564">
    <property type="type" value="gene"/>
</dbReference>
<dbReference type="neXtProt" id="NX_Q8IY45"/>
<dbReference type="OpenTargets" id="ENSG00000151743"/>
<dbReference type="PharmGKB" id="PA162376371"/>
<dbReference type="VEuPathDB" id="HostDB:ENSG00000151743"/>
<dbReference type="eggNOG" id="KOG1947">
    <property type="taxonomic scope" value="Eukaryota"/>
</dbReference>
<dbReference type="GeneTree" id="ENSGT00730000111305"/>
<dbReference type="HOGENOM" id="CLU_087966_0_0_1"/>
<dbReference type="InParanoid" id="Q8IY45"/>
<dbReference type="OMA" id="MSWDGAG"/>
<dbReference type="OrthoDB" id="10257471at2759"/>
<dbReference type="PAN-GO" id="Q8IY45">
    <property type="GO annotations" value="2 GO annotations based on evolutionary models"/>
</dbReference>
<dbReference type="PhylomeDB" id="Q8IY45"/>
<dbReference type="TreeFam" id="TF331575"/>
<dbReference type="PathwayCommons" id="Q8IY45"/>
<dbReference type="BioGRID-ORCS" id="196394">
    <property type="hits" value="12 hits in 1156 CRISPR screens"/>
</dbReference>
<dbReference type="ChiTaRS" id="AMN1">
    <property type="organism name" value="human"/>
</dbReference>
<dbReference type="GenomeRNAi" id="196394"/>
<dbReference type="Pharos" id="Q8IY45">
    <property type="development level" value="Tbio"/>
</dbReference>
<dbReference type="PRO" id="PR:Q8IY45"/>
<dbReference type="Proteomes" id="UP000005640">
    <property type="component" value="Chromosome 12"/>
</dbReference>
<dbReference type="RNAct" id="Q8IY45">
    <property type="molecule type" value="protein"/>
</dbReference>
<dbReference type="Bgee" id="ENSG00000151743">
    <property type="expression patterns" value="Expressed in cortical plate and 158 other cell types or tissues"/>
</dbReference>
<dbReference type="ExpressionAtlas" id="Q8IY45">
    <property type="expression patterns" value="baseline and differential"/>
</dbReference>
<dbReference type="GO" id="GO:0031528">
    <property type="term" value="C:microvillus membrane"/>
    <property type="evidence" value="ECO:0007669"/>
    <property type="project" value="Ensembl"/>
</dbReference>
<dbReference type="GO" id="GO:0019005">
    <property type="term" value="C:SCF ubiquitin ligase complex"/>
    <property type="evidence" value="ECO:0000318"/>
    <property type="project" value="GO_Central"/>
</dbReference>
<dbReference type="GO" id="GO:0031146">
    <property type="term" value="P:SCF-dependent proteasomal ubiquitin-dependent protein catabolic process"/>
    <property type="evidence" value="ECO:0000318"/>
    <property type="project" value="GO_Central"/>
</dbReference>
<dbReference type="CDD" id="cd09293">
    <property type="entry name" value="AMN1"/>
    <property type="match status" value="1"/>
</dbReference>
<dbReference type="FunFam" id="3.80.10.10:FF:000178">
    <property type="entry name" value="protein AMN1 homolog isoform X1"/>
    <property type="match status" value="1"/>
</dbReference>
<dbReference type="Gene3D" id="3.80.10.10">
    <property type="entry name" value="Ribonuclease Inhibitor"/>
    <property type="match status" value="1"/>
</dbReference>
<dbReference type="InterPro" id="IPR001611">
    <property type="entry name" value="Leu-rich_rpt"/>
</dbReference>
<dbReference type="InterPro" id="IPR006553">
    <property type="entry name" value="Leu-rich_rpt_Cys-con_subtyp"/>
</dbReference>
<dbReference type="InterPro" id="IPR032675">
    <property type="entry name" value="LRR_dom_sf"/>
</dbReference>
<dbReference type="PANTHER" id="PTHR13318">
    <property type="entry name" value="PARTNER OF PAIRED, ISOFORM B-RELATED"/>
    <property type="match status" value="1"/>
</dbReference>
<dbReference type="PANTHER" id="PTHR13318:SF254">
    <property type="entry name" value="PROTEIN AMN1 HOMOLOG"/>
    <property type="match status" value="1"/>
</dbReference>
<dbReference type="Pfam" id="PF13516">
    <property type="entry name" value="LRR_6"/>
    <property type="match status" value="3"/>
</dbReference>
<dbReference type="SMART" id="SM00367">
    <property type="entry name" value="LRR_CC"/>
    <property type="match status" value="6"/>
</dbReference>
<dbReference type="SUPFAM" id="SSF52047">
    <property type="entry name" value="RNI-like"/>
    <property type="match status" value="1"/>
</dbReference>
<name>AMN1_HUMAN</name>
<gene>
    <name type="primary">AMN1</name>
</gene>
<accession>Q8IY45</accession>
<accession>B7Z7J3</accession>
<accession>Q6NVU4</accession>
<accession>Q86X98</accession>
<feature type="chain" id="PRO_0000289273" description="Protein AMN1 homolog">
    <location>
        <begin position="1"/>
        <end position="258"/>
    </location>
</feature>
<feature type="splice variant" id="VSP_054567" description="In isoform 2." evidence="2">
    <location>
        <begin position="1"/>
        <end position="18"/>
    </location>
</feature>
<protein>
    <recommendedName>
        <fullName>Protein AMN1 homolog</fullName>
    </recommendedName>
</protein>
<evidence type="ECO:0000250" key="1">
    <source>
        <dbReference type="UniProtKB" id="B8JKV0"/>
    </source>
</evidence>
<evidence type="ECO:0000303" key="2">
    <source>
    </source>
</evidence>
<evidence type="ECO:0000305" key="3"/>
<organism>
    <name type="scientific">Homo sapiens</name>
    <name type="common">Human</name>
    <dbReference type="NCBI Taxonomy" id="9606"/>
    <lineage>
        <taxon>Eukaryota</taxon>
        <taxon>Metazoa</taxon>
        <taxon>Chordata</taxon>
        <taxon>Craniata</taxon>
        <taxon>Vertebrata</taxon>
        <taxon>Euteleostomi</taxon>
        <taxon>Mammalia</taxon>
        <taxon>Eutheria</taxon>
        <taxon>Euarchontoglires</taxon>
        <taxon>Primates</taxon>
        <taxon>Haplorrhini</taxon>
        <taxon>Catarrhini</taxon>
        <taxon>Hominidae</taxon>
        <taxon>Homo</taxon>
    </lineage>
</organism>